<dbReference type="EC" id="2.4.2.7" evidence="1"/>
<dbReference type="EMBL" id="CP001287">
    <property type="protein sequence ID" value="ACK68255.1"/>
    <property type="molecule type" value="Genomic_DNA"/>
</dbReference>
<dbReference type="RefSeq" id="WP_015785311.1">
    <property type="nucleotide sequence ID" value="NC_011726.1"/>
</dbReference>
<dbReference type="SMR" id="B7JVC2"/>
<dbReference type="STRING" id="41431.PCC8801_4333"/>
<dbReference type="KEGG" id="cyp:PCC8801_4333"/>
<dbReference type="eggNOG" id="COG0503">
    <property type="taxonomic scope" value="Bacteria"/>
</dbReference>
<dbReference type="HOGENOM" id="CLU_063339_3_0_3"/>
<dbReference type="OrthoDB" id="9803963at2"/>
<dbReference type="UniPathway" id="UPA00588">
    <property type="reaction ID" value="UER00646"/>
</dbReference>
<dbReference type="Proteomes" id="UP000008204">
    <property type="component" value="Chromosome"/>
</dbReference>
<dbReference type="GO" id="GO:0005737">
    <property type="term" value="C:cytoplasm"/>
    <property type="evidence" value="ECO:0007669"/>
    <property type="project" value="UniProtKB-SubCell"/>
</dbReference>
<dbReference type="GO" id="GO:0002055">
    <property type="term" value="F:adenine binding"/>
    <property type="evidence" value="ECO:0007669"/>
    <property type="project" value="TreeGrafter"/>
</dbReference>
<dbReference type="GO" id="GO:0003999">
    <property type="term" value="F:adenine phosphoribosyltransferase activity"/>
    <property type="evidence" value="ECO:0007669"/>
    <property type="project" value="UniProtKB-UniRule"/>
</dbReference>
<dbReference type="GO" id="GO:0016208">
    <property type="term" value="F:AMP binding"/>
    <property type="evidence" value="ECO:0007669"/>
    <property type="project" value="TreeGrafter"/>
</dbReference>
<dbReference type="GO" id="GO:0006168">
    <property type="term" value="P:adenine salvage"/>
    <property type="evidence" value="ECO:0007669"/>
    <property type="project" value="InterPro"/>
</dbReference>
<dbReference type="GO" id="GO:0044209">
    <property type="term" value="P:AMP salvage"/>
    <property type="evidence" value="ECO:0007669"/>
    <property type="project" value="UniProtKB-UniRule"/>
</dbReference>
<dbReference type="GO" id="GO:0006166">
    <property type="term" value="P:purine ribonucleoside salvage"/>
    <property type="evidence" value="ECO:0007669"/>
    <property type="project" value="UniProtKB-KW"/>
</dbReference>
<dbReference type="CDD" id="cd06223">
    <property type="entry name" value="PRTases_typeI"/>
    <property type="match status" value="1"/>
</dbReference>
<dbReference type="FunFam" id="3.40.50.2020:FF:000004">
    <property type="entry name" value="Adenine phosphoribosyltransferase"/>
    <property type="match status" value="1"/>
</dbReference>
<dbReference type="Gene3D" id="3.40.50.2020">
    <property type="match status" value="1"/>
</dbReference>
<dbReference type="HAMAP" id="MF_00004">
    <property type="entry name" value="Aden_phosphoribosyltr"/>
    <property type="match status" value="1"/>
</dbReference>
<dbReference type="InterPro" id="IPR005764">
    <property type="entry name" value="Ade_phspho_trans"/>
</dbReference>
<dbReference type="InterPro" id="IPR000836">
    <property type="entry name" value="PRibTrfase_dom"/>
</dbReference>
<dbReference type="InterPro" id="IPR029057">
    <property type="entry name" value="PRTase-like"/>
</dbReference>
<dbReference type="InterPro" id="IPR050054">
    <property type="entry name" value="UPRTase/APRTase"/>
</dbReference>
<dbReference type="NCBIfam" id="TIGR01090">
    <property type="entry name" value="apt"/>
    <property type="match status" value="1"/>
</dbReference>
<dbReference type="NCBIfam" id="NF002634">
    <property type="entry name" value="PRK02304.1-3"/>
    <property type="match status" value="1"/>
</dbReference>
<dbReference type="NCBIfam" id="NF002636">
    <property type="entry name" value="PRK02304.1-5"/>
    <property type="match status" value="1"/>
</dbReference>
<dbReference type="PANTHER" id="PTHR32315">
    <property type="entry name" value="ADENINE PHOSPHORIBOSYLTRANSFERASE"/>
    <property type="match status" value="1"/>
</dbReference>
<dbReference type="PANTHER" id="PTHR32315:SF3">
    <property type="entry name" value="ADENINE PHOSPHORIBOSYLTRANSFERASE"/>
    <property type="match status" value="1"/>
</dbReference>
<dbReference type="Pfam" id="PF00156">
    <property type="entry name" value="Pribosyltran"/>
    <property type="match status" value="1"/>
</dbReference>
<dbReference type="SUPFAM" id="SSF53271">
    <property type="entry name" value="PRTase-like"/>
    <property type="match status" value="1"/>
</dbReference>
<dbReference type="PROSITE" id="PS00103">
    <property type="entry name" value="PUR_PYR_PR_TRANSFER"/>
    <property type="match status" value="1"/>
</dbReference>
<feature type="chain" id="PRO_1000116170" description="Adenine phosphoribosyltransferase">
    <location>
        <begin position="1"/>
        <end position="172"/>
    </location>
</feature>
<gene>
    <name evidence="1" type="primary">apt</name>
    <name type="ordered locus">PCC8801_4333</name>
</gene>
<accession>B7JVC2</accession>
<evidence type="ECO:0000255" key="1">
    <source>
        <dbReference type="HAMAP-Rule" id="MF_00004"/>
    </source>
</evidence>
<organism>
    <name type="scientific">Rippkaea orientalis (strain PCC 8801 / RF-1)</name>
    <name type="common">Cyanothece sp. (strain PCC 8801)</name>
    <dbReference type="NCBI Taxonomy" id="41431"/>
    <lineage>
        <taxon>Bacteria</taxon>
        <taxon>Bacillati</taxon>
        <taxon>Cyanobacteriota</taxon>
        <taxon>Cyanophyceae</taxon>
        <taxon>Oscillatoriophycideae</taxon>
        <taxon>Chroococcales</taxon>
        <taxon>Aphanothecaceae</taxon>
        <taxon>Rippkaea</taxon>
        <taxon>Rippkaea orientalis</taxon>
    </lineage>
</organism>
<proteinExistence type="inferred from homology"/>
<reference key="1">
    <citation type="journal article" date="2011" name="MBio">
        <title>Novel metabolic attributes of the genus Cyanothece, comprising a group of unicellular nitrogen-fixing Cyanobacteria.</title>
        <authorList>
            <person name="Bandyopadhyay A."/>
            <person name="Elvitigala T."/>
            <person name="Welsh E."/>
            <person name="Stockel J."/>
            <person name="Liberton M."/>
            <person name="Min H."/>
            <person name="Sherman L.A."/>
            <person name="Pakrasi H.B."/>
        </authorList>
    </citation>
    <scope>NUCLEOTIDE SEQUENCE [LARGE SCALE GENOMIC DNA]</scope>
    <source>
        <strain>PCC 8801 / RF-1</strain>
    </source>
</reference>
<comment type="function">
    <text evidence="1">Catalyzes a salvage reaction resulting in the formation of AMP, that is energically less costly than de novo synthesis.</text>
</comment>
<comment type="catalytic activity">
    <reaction evidence="1">
        <text>AMP + diphosphate = 5-phospho-alpha-D-ribose 1-diphosphate + adenine</text>
        <dbReference type="Rhea" id="RHEA:16609"/>
        <dbReference type="ChEBI" id="CHEBI:16708"/>
        <dbReference type="ChEBI" id="CHEBI:33019"/>
        <dbReference type="ChEBI" id="CHEBI:58017"/>
        <dbReference type="ChEBI" id="CHEBI:456215"/>
        <dbReference type="EC" id="2.4.2.7"/>
    </reaction>
</comment>
<comment type="pathway">
    <text evidence="1">Purine metabolism; AMP biosynthesis via salvage pathway; AMP from adenine: step 1/1.</text>
</comment>
<comment type="subunit">
    <text evidence="1">Homodimer.</text>
</comment>
<comment type="subcellular location">
    <subcellularLocation>
        <location evidence="1">Cytoplasm</location>
    </subcellularLocation>
</comment>
<comment type="similarity">
    <text evidence="1">Belongs to the purine/pyrimidine phosphoribosyltransferase family.</text>
</comment>
<sequence>MDLKALIRDIPDFPKPGIMFRDITTLLSHGEGLRYTIDTLTEKCQTAGLIPDYVVGMESRGFLFGVPLAYQLQAGFVPVRKPGKLPAAVHQVEYELEYGTDRLEIHQDALADHHRVLIVDDLIATGGTAKATADLLEKIGCEVLGFAFIIELTGLGGREKLPDVPIITLVDY</sequence>
<name>APT_RIPO1</name>
<protein>
    <recommendedName>
        <fullName evidence="1">Adenine phosphoribosyltransferase</fullName>
        <shortName evidence="1">APRT</shortName>
        <ecNumber evidence="1">2.4.2.7</ecNumber>
    </recommendedName>
</protein>
<keyword id="KW-0963">Cytoplasm</keyword>
<keyword id="KW-0328">Glycosyltransferase</keyword>
<keyword id="KW-0660">Purine salvage</keyword>
<keyword id="KW-1185">Reference proteome</keyword>
<keyword id="KW-0808">Transferase</keyword>